<comment type="function">
    <text evidence="1">Component of the transcription factor SL1/TIF-IB complex, which is involved in the assembly of the PIC (preinitiation complex) during RNA polymerase I-dependent transcription. The rate of PIC formation probably is primarily dependent on the rate of association of SL1/TIF-IB with the rDNA promoter. SL1/TIF-IB is involved in stabilization of nucleolar transcription factor 1/UBTF on rDNA. Formation of SL1/TIF-IB excludes the association of TBP with TFIID subunits (By similarity).</text>
</comment>
<comment type="subunit">
    <text evidence="1">Component of the transcription factor SL1/TIF-IB complex, composed of TBP and at least TAF1A, TAF1B, TAF1C and TAF1D. Interacts with UBTF (By similarity).</text>
</comment>
<comment type="subcellular location">
    <subcellularLocation>
        <location evidence="1">Nucleus</location>
    </subcellularLocation>
</comment>
<protein>
    <recommendedName>
        <fullName>TATA box-binding protein-associated factor RNA polymerase I subunit D</fullName>
    </recommendedName>
    <alternativeName>
        <fullName>TATA box-binding protein-associated factor 1D</fullName>
        <shortName>TBP-associated factor 1D</shortName>
    </alternativeName>
    <alternativeName>
        <fullName>Transcription initiation factor SL1/TIF-IB subunit D</fullName>
    </alternativeName>
</protein>
<evidence type="ECO:0000250" key="1"/>
<evidence type="ECO:0000250" key="2">
    <source>
        <dbReference type="UniProtKB" id="Q9H5J8"/>
    </source>
</evidence>
<evidence type="ECO:0000256" key="3">
    <source>
        <dbReference type="SAM" id="MobiDB-lite"/>
    </source>
</evidence>
<gene>
    <name type="primary">TAF1D</name>
    <name type="synonym">JOSD3</name>
</gene>
<feature type="chain" id="PRO_0000250716" description="TATA box-binding protein-associated factor RNA polymerase I subunit D">
    <location>
        <begin position="1"/>
        <end position="274"/>
    </location>
</feature>
<feature type="region of interest" description="Disordered" evidence="3">
    <location>
        <begin position="1"/>
        <end position="45"/>
    </location>
</feature>
<feature type="region of interest" description="Disordered" evidence="3">
    <location>
        <begin position="84"/>
        <end position="111"/>
    </location>
</feature>
<feature type="compositionally biased region" description="Polar residues" evidence="3">
    <location>
        <begin position="1"/>
        <end position="19"/>
    </location>
</feature>
<feature type="compositionally biased region" description="Basic residues" evidence="3">
    <location>
        <begin position="84"/>
        <end position="110"/>
    </location>
</feature>
<feature type="modified residue" description="Phosphoserine" evidence="2">
    <location>
        <position position="20"/>
    </location>
</feature>
<feature type="modified residue" description="Phosphoserine" evidence="2">
    <location>
        <position position="132"/>
    </location>
</feature>
<feature type="modified residue" description="Phosphoserine" evidence="2">
    <location>
        <position position="229"/>
    </location>
</feature>
<name>TAF1D_BOVIN</name>
<organism>
    <name type="scientific">Bos taurus</name>
    <name type="common">Bovine</name>
    <dbReference type="NCBI Taxonomy" id="9913"/>
    <lineage>
        <taxon>Eukaryota</taxon>
        <taxon>Metazoa</taxon>
        <taxon>Chordata</taxon>
        <taxon>Craniata</taxon>
        <taxon>Vertebrata</taxon>
        <taxon>Euteleostomi</taxon>
        <taxon>Mammalia</taxon>
        <taxon>Eutheria</taxon>
        <taxon>Laurasiatheria</taxon>
        <taxon>Artiodactyla</taxon>
        <taxon>Ruminantia</taxon>
        <taxon>Pecora</taxon>
        <taxon>Bovidae</taxon>
        <taxon>Bovinae</taxon>
        <taxon>Bos</taxon>
    </lineage>
</organism>
<accession>Q32LB6</accession>
<keyword id="KW-0238">DNA-binding</keyword>
<keyword id="KW-0539">Nucleus</keyword>
<keyword id="KW-0597">Phosphoprotein</keyword>
<keyword id="KW-1185">Reference proteome</keyword>
<keyword id="KW-0804">Transcription</keyword>
<keyword id="KW-0805">Transcription regulation</keyword>
<reference key="1">
    <citation type="submission" date="2005-11" db="EMBL/GenBank/DDBJ databases">
        <authorList>
            <consortium name="NIH - Mammalian Gene Collection (MGC) project"/>
        </authorList>
    </citation>
    <scope>NUCLEOTIDE SEQUENCE [LARGE SCALE MRNA]</scope>
    <source>
        <strain>Crossbred X Angus</strain>
        <tissue>Liver</tissue>
    </source>
</reference>
<sequence>MDSLNYTTACDSAVETENQSDNSSSGSSLFKTQCVPVPPKRRQRNTIRKFVHIPKNTQATESSSDSSIEPRPLTLKAIFERFKNKKRKRKKKKYKPTGRSVGRPKGRRTTRYSQITEKQFKDKRPGFPFLESENGRKPLPWRKILTFEQAVARGFFNYLEKLKYEYYLKESLKQMNVAEDLEKDDLDSRRYRYLDDDGSLSPIEESAAEEETAANLEHDECDIKLVENSYFIISSEFPKKKQNVHLDQEEYTEETALLKKRTSKSKHWIEDKMA</sequence>
<dbReference type="EMBL" id="BC109659">
    <property type="protein sequence ID" value="AAI09660.1"/>
    <property type="molecule type" value="mRNA"/>
</dbReference>
<dbReference type="RefSeq" id="NP_001032675.1">
    <property type="nucleotide sequence ID" value="NM_001037586.2"/>
</dbReference>
<dbReference type="FunCoup" id="Q32LB6">
    <property type="interactions" value="1295"/>
</dbReference>
<dbReference type="STRING" id="9913.ENSBTAP00000004611"/>
<dbReference type="PaxDb" id="9913-ENSBTAP00000004611"/>
<dbReference type="Ensembl" id="ENSBTAT00000004611.5">
    <property type="protein sequence ID" value="ENSBTAP00000004611.4"/>
    <property type="gene ID" value="ENSBTAG00000003545.5"/>
</dbReference>
<dbReference type="GeneID" id="505533"/>
<dbReference type="KEGG" id="bta:505533"/>
<dbReference type="CTD" id="79101"/>
<dbReference type="VEuPathDB" id="HostDB:ENSBTAG00000003545"/>
<dbReference type="VGNC" id="VGNC:35572">
    <property type="gene designation" value="TAF1D"/>
</dbReference>
<dbReference type="eggNOG" id="ENOG502SQMW">
    <property type="taxonomic scope" value="Eukaryota"/>
</dbReference>
<dbReference type="GeneTree" id="ENSGT00390000009061"/>
<dbReference type="HOGENOM" id="CLU_071614_1_0_1"/>
<dbReference type="InParanoid" id="Q32LB6"/>
<dbReference type="OMA" id="RKFVHTP"/>
<dbReference type="OrthoDB" id="9950926at2759"/>
<dbReference type="TreeFam" id="TF335756"/>
<dbReference type="Reactome" id="R-BTA-5250924">
    <property type="pathway name" value="B-WICH complex positively regulates rRNA expression"/>
</dbReference>
<dbReference type="Reactome" id="R-BTA-73762">
    <property type="pathway name" value="RNA Polymerase I Transcription Initiation"/>
</dbReference>
<dbReference type="Reactome" id="R-BTA-73772">
    <property type="pathway name" value="RNA Polymerase I Promoter Escape"/>
</dbReference>
<dbReference type="Reactome" id="R-BTA-73863">
    <property type="pathway name" value="RNA Polymerase I Transcription Termination"/>
</dbReference>
<dbReference type="Proteomes" id="UP000009136">
    <property type="component" value="Chromosome 29"/>
</dbReference>
<dbReference type="Bgee" id="ENSBTAG00000003545">
    <property type="expression patterns" value="Expressed in pharyngeal tonsil and 109 other cell types or tissues"/>
</dbReference>
<dbReference type="GO" id="GO:0034451">
    <property type="term" value="C:centriolar satellite"/>
    <property type="evidence" value="ECO:0007669"/>
    <property type="project" value="Ensembl"/>
</dbReference>
<dbReference type="GO" id="GO:0005829">
    <property type="term" value="C:cytosol"/>
    <property type="evidence" value="ECO:0007669"/>
    <property type="project" value="Ensembl"/>
</dbReference>
<dbReference type="GO" id="GO:0072686">
    <property type="term" value="C:mitotic spindle"/>
    <property type="evidence" value="ECO:0007669"/>
    <property type="project" value="Ensembl"/>
</dbReference>
<dbReference type="GO" id="GO:0005654">
    <property type="term" value="C:nucleoplasm"/>
    <property type="evidence" value="ECO:0000318"/>
    <property type="project" value="GO_Central"/>
</dbReference>
<dbReference type="GO" id="GO:0005668">
    <property type="term" value="C:RNA polymerase transcription factor SL1 complex"/>
    <property type="evidence" value="ECO:0007669"/>
    <property type="project" value="InterPro"/>
</dbReference>
<dbReference type="GO" id="GO:0003677">
    <property type="term" value="F:DNA binding"/>
    <property type="evidence" value="ECO:0007669"/>
    <property type="project" value="UniProtKB-KW"/>
</dbReference>
<dbReference type="GO" id="GO:0042802">
    <property type="term" value="F:identical protein binding"/>
    <property type="evidence" value="ECO:0007669"/>
    <property type="project" value="Ensembl"/>
</dbReference>
<dbReference type="GO" id="GO:0006355">
    <property type="term" value="P:regulation of DNA-templated transcription"/>
    <property type="evidence" value="ECO:0007669"/>
    <property type="project" value="InterPro"/>
</dbReference>
<dbReference type="InterPro" id="IPR027976">
    <property type="entry name" value="TAF1D"/>
</dbReference>
<dbReference type="PANTHER" id="PTHR14562">
    <property type="entry name" value="TATA BOX-BINDING PROTEIN ASSOCIATED FACTOR RNA POLYMERASE I SUBUNIT D"/>
    <property type="match status" value="1"/>
</dbReference>
<dbReference type="PANTHER" id="PTHR14562:SF3">
    <property type="entry name" value="TATA BOX-BINDING PROTEIN-ASSOCIATED FACTOR RNA POLYMERASE I SUBUNIT D"/>
    <property type="match status" value="1"/>
</dbReference>
<dbReference type="Pfam" id="PF15333">
    <property type="entry name" value="TAF1D"/>
    <property type="match status" value="1"/>
</dbReference>
<proteinExistence type="evidence at transcript level"/>